<sequence length="130" mass="14234">MSQAQYAGTGRRKNAVARVRLVPGTGKITVNKKDVEEYIPHADLRLVINQPFAVTSTVGSYDVFVNVVGGGYAGQSGAIRHGIARALLQVDPDFRDSLKRAGLLTRDSRKVERKKPGLKKARKASQFSKR</sequence>
<keyword id="KW-0687">Ribonucleoprotein</keyword>
<keyword id="KW-0689">Ribosomal protein</keyword>
<name>RS9_STRZJ</name>
<organism>
    <name type="scientific">Streptococcus pneumoniae (strain JJA)</name>
    <dbReference type="NCBI Taxonomy" id="488222"/>
    <lineage>
        <taxon>Bacteria</taxon>
        <taxon>Bacillati</taxon>
        <taxon>Bacillota</taxon>
        <taxon>Bacilli</taxon>
        <taxon>Lactobacillales</taxon>
        <taxon>Streptococcaceae</taxon>
        <taxon>Streptococcus</taxon>
    </lineage>
</organism>
<evidence type="ECO:0000255" key="1">
    <source>
        <dbReference type="HAMAP-Rule" id="MF_00532"/>
    </source>
</evidence>
<evidence type="ECO:0000256" key="2">
    <source>
        <dbReference type="SAM" id="MobiDB-lite"/>
    </source>
</evidence>
<evidence type="ECO:0000305" key="3"/>
<comment type="similarity">
    <text evidence="1">Belongs to the universal ribosomal protein uS9 family.</text>
</comment>
<proteinExistence type="inferred from homology"/>
<gene>
    <name evidence="1" type="primary">rpsI</name>
    <name type="ordered locus">SPJ_0305</name>
</gene>
<protein>
    <recommendedName>
        <fullName evidence="1">Small ribosomal subunit protein uS9</fullName>
    </recommendedName>
    <alternativeName>
        <fullName evidence="3">30S ribosomal protein S9</fullName>
    </alternativeName>
</protein>
<feature type="chain" id="PRO_1000146474" description="Small ribosomal subunit protein uS9">
    <location>
        <begin position="1"/>
        <end position="130"/>
    </location>
</feature>
<feature type="region of interest" description="Disordered" evidence="2">
    <location>
        <begin position="106"/>
        <end position="130"/>
    </location>
</feature>
<feature type="compositionally biased region" description="Basic residues" evidence="2">
    <location>
        <begin position="111"/>
        <end position="130"/>
    </location>
</feature>
<accession>C1CC86</accession>
<dbReference type="EMBL" id="CP000919">
    <property type="protein sequence ID" value="ACO18308.1"/>
    <property type="molecule type" value="Genomic_DNA"/>
</dbReference>
<dbReference type="RefSeq" id="WP_000075973.1">
    <property type="nucleotide sequence ID" value="NC_012466.1"/>
</dbReference>
<dbReference type="SMR" id="C1CC86"/>
<dbReference type="GeneID" id="93922492"/>
<dbReference type="KEGG" id="sjj:SPJ_0305"/>
<dbReference type="HOGENOM" id="CLU_046483_2_1_9"/>
<dbReference type="Proteomes" id="UP000002206">
    <property type="component" value="Chromosome"/>
</dbReference>
<dbReference type="GO" id="GO:0022627">
    <property type="term" value="C:cytosolic small ribosomal subunit"/>
    <property type="evidence" value="ECO:0007669"/>
    <property type="project" value="TreeGrafter"/>
</dbReference>
<dbReference type="GO" id="GO:0003723">
    <property type="term" value="F:RNA binding"/>
    <property type="evidence" value="ECO:0007669"/>
    <property type="project" value="TreeGrafter"/>
</dbReference>
<dbReference type="GO" id="GO:0003735">
    <property type="term" value="F:structural constituent of ribosome"/>
    <property type="evidence" value="ECO:0007669"/>
    <property type="project" value="InterPro"/>
</dbReference>
<dbReference type="GO" id="GO:0006412">
    <property type="term" value="P:translation"/>
    <property type="evidence" value="ECO:0007669"/>
    <property type="project" value="UniProtKB-UniRule"/>
</dbReference>
<dbReference type="FunFam" id="3.30.230.10:FF:000001">
    <property type="entry name" value="30S ribosomal protein S9"/>
    <property type="match status" value="1"/>
</dbReference>
<dbReference type="Gene3D" id="3.30.230.10">
    <property type="match status" value="1"/>
</dbReference>
<dbReference type="HAMAP" id="MF_00532_B">
    <property type="entry name" value="Ribosomal_uS9_B"/>
    <property type="match status" value="1"/>
</dbReference>
<dbReference type="InterPro" id="IPR020568">
    <property type="entry name" value="Ribosomal_Su5_D2-typ_SF"/>
</dbReference>
<dbReference type="InterPro" id="IPR000754">
    <property type="entry name" value="Ribosomal_uS9"/>
</dbReference>
<dbReference type="InterPro" id="IPR023035">
    <property type="entry name" value="Ribosomal_uS9_bac/plastid"/>
</dbReference>
<dbReference type="InterPro" id="IPR020574">
    <property type="entry name" value="Ribosomal_uS9_CS"/>
</dbReference>
<dbReference type="InterPro" id="IPR014721">
    <property type="entry name" value="Ribsml_uS5_D2-typ_fold_subgr"/>
</dbReference>
<dbReference type="NCBIfam" id="NF001099">
    <property type="entry name" value="PRK00132.1"/>
    <property type="match status" value="1"/>
</dbReference>
<dbReference type="PANTHER" id="PTHR21569">
    <property type="entry name" value="RIBOSOMAL PROTEIN S9"/>
    <property type="match status" value="1"/>
</dbReference>
<dbReference type="PANTHER" id="PTHR21569:SF1">
    <property type="entry name" value="SMALL RIBOSOMAL SUBUNIT PROTEIN US9M"/>
    <property type="match status" value="1"/>
</dbReference>
<dbReference type="Pfam" id="PF00380">
    <property type="entry name" value="Ribosomal_S9"/>
    <property type="match status" value="1"/>
</dbReference>
<dbReference type="SUPFAM" id="SSF54211">
    <property type="entry name" value="Ribosomal protein S5 domain 2-like"/>
    <property type="match status" value="1"/>
</dbReference>
<dbReference type="PROSITE" id="PS00360">
    <property type="entry name" value="RIBOSOMAL_S9"/>
    <property type="match status" value="1"/>
</dbReference>
<reference key="1">
    <citation type="journal article" date="2010" name="Genome Biol.">
        <title>Structure and dynamics of the pan-genome of Streptococcus pneumoniae and closely related species.</title>
        <authorList>
            <person name="Donati C."/>
            <person name="Hiller N.L."/>
            <person name="Tettelin H."/>
            <person name="Muzzi A."/>
            <person name="Croucher N.J."/>
            <person name="Angiuoli S.V."/>
            <person name="Oggioni M."/>
            <person name="Dunning Hotopp J.C."/>
            <person name="Hu F.Z."/>
            <person name="Riley D.R."/>
            <person name="Covacci A."/>
            <person name="Mitchell T.J."/>
            <person name="Bentley S.D."/>
            <person name="Kilian M."/>
            <person name="Ehrlich G.D."/>
            <person name="Rappuoli R."/>
            <person name="Moxon E.R."/>
            <person name="Masignani V."/>
        </authorList>
    </citation>
    <scope>NUCLEOTIDE SEQUENCE [LARGE SCALE GENOMIC DNA]</scope>
    <source>
        <strain>JJA</strain>
    </source>
</reference>